<gene>
    <name type="primary">pyd1</name>
    <name type="ORF">DDB_G0267966</name>
</gene>
<reference key="1">
    <citation type="submission" date="2002-09" db="EMBL/GenBank/DDBJ databases">
        <title>Dihydropyrimidine dehydrogenases and the evolution of the pyrimidine degradation pathway.</title>
        <authorList>
            <person name="Gojkovic Z."/>
            <person name="Sandrini M.P.B."/>
            <person name="Piskur J."/>
        </authorList>
    </citation>
    <scope>NUCLEOTIDE SEQUENCE [MRNA]</scope>
</reference>
<reference key="2">
    <citation type="journal article" date="2005" name="Nature">
        <title>The genome of the social amoeba Dictyostelium discoideum.</title>
        <authorList>
            <person name="Eichinger L."/>
            <person name="Pachebat J.A."/>
            <person name="Gloeckner G."/>
            <person name="Rajandream M.A."/>
            <person name="Sucgang R."/>
            <person name="Berriman M."/>
            <person name="Song J."/>
            <person name="Olsen R."/>
            <person name="Szafranski K."/>
            <person name="Xu Q."/>
            <person name="Tunggal B."/>
            <person name="Kummerfeld S."/>
            <person name="Madera M."/>
            <person name="Konfortov B.A."/>
            <person name="Rivero F."/>
            <person name="Bankier A.T."/>
            <person name="Lehmann R."/>
            <person name="Hamlin N."/>
            <person name="Davies R."/>
            <person name="Gaudet P."/>
            <person name="Fey P."/>
            <person name="Pilcher K."/>
            <person name="Chen G."/>
            <person name="Saunders D."/>
            <person name="Sodergren E.J."/>
            <person name="Davis P."/>
            <person name="Kerhornou A."/>
            <person name="Nie X."/>
            <person name="Hall N."/>
            <person name="Anjard C."/>
            <person name="Hemphill L."/>
            <person name="Bason N."/>
            <person name="Farbrother P."/>
            <person name="Desany B."/>
            <person name="Just E."/>
            <person name="Morio T."/>
            <person name="Rost R."/>
            <person name="Churcher C.M."/>
            <person name="Cooper J."/>
            <person name="Haydock S."/>
            <person name="van Driessche N."/>
            <person name="Cronin A."/>
            <person name="Goodhead I."/>
            <person name="Muzny D.M."/>
            <person name="Mourier T."/>
            <person name="Pain A."/>
            <person name="Lu M."/>
            <person name="Harper D."/>
            <person name="Lindsay R."/>
            <person name="Hauser H."/>
            <person name="James K.D."/>
            <person name="Quiles M."/>
            <person name="Madan Babu M."/>
            <person name="Saito T."/>
            <person name="Buchrieser C."/>
            <person name="Wardroper A."/>
            <person name="Felder M."/>
            <person name="Thangavelu M."/>
            <person name="Johnson D."/>
            <person name="Knights A."/>
            <person name="Loulseged H."/>
            <person name="Mungall K.L."/>
            <person name="Oliver K."/>
            <person name="Price C."/>
            <person name="Quail M.A."/>
            <person name="Urushihara H."/>
            <person name="Hernandez J."/>
            <person name="Rabbinowitsch E."/>
            <person name="Steffen D."/>
            <person name="Sanders M."/>
            <person name="Ma J."/>
            <person name="Kohara Y."/>
            <person name="Sharp S."/>
            <person name="Simmonds M.N."/>
            <person name="Spiegler S."/>
            <person name="Tivey A."/>
            <person name="Sugano S."/>
            <person name="White B."/>
            <person name="Walker D."/>
            <person name="Woodward J.R."/>
            <person name="Winckler T."/>
            <person name="Tanaka Y."/>
            <person name="Shaulsky G."/>
            <person name="Schleicher M."/>
            <person name="Weinstock G.M."/>
            <person name="Rosenthal A."/>
            <person name="Cox E.C."/>
            <person name="Chisholm R.L."/>
            <person name="Gibbs R.A."/>
            <person name="Loomis W.F."/>
            <person name="Platzer M."/>
            <person name="Kay R.R."/>
            <person name="Williams J.G."/>
            <person name="Dear P.H."/>
            <person name="Noegel A.A."/>
            <person name="Barrell B.G."/>
            <person name="Kuspa A."/>
        </authorList>
    </citation>
    <scope>NUCLEOTIDE SEQUENCE [LARGE SCALE GENOMIC DNA]</scope>
    <source>
        <strain>AX4</strain>
    </source>
</reference>
<proteinExistence type="evidence at transcript level"/>
<feature type="chain" id="PRO_0000327500" description="Dihydropyrimidine dehydrogenase [NADP(+)]">
    <location>
        <begin position="1"/>
        <end position="1009"/>
    </location>
</feature>
<feature type="domain" description="4Fe-4S ferredoxin-type 1" evidence="2">
    <location>
        <begin position="69"/>
        <end position="99"/>
    </location>
</feature>
<feature type="domain" description="4Fe-4S ferredoxin-type 2" evidence="2">
    <location>
        <begin position="932"/>
        <end position="964"/>
    </location>
</feature>
<feature type="domain" description="4Fe-4S ferredoxin-type 3" evidence="2">
    <location>
        <begin position="965"/>
        <end position="995"/>
    </location>
</feature>
<feature type="active site" description="Proton acceptor" evidence="1">
    <location>
        <position position="669"/>
    </location>
</feature>
<feature type="binding site" evidence="1">
    <location>
        <position position="78"/>
    </location>
    <ligand>
        <name>[4Fe-4S] cluster</name>
        <dbReference type="ChEBI" id="CHEBI:49883"/>
        <label>1</label>
    </ligand>
</feature>
<feature type="binding site" evidence="1">
    <location>
        <position position="81"/>
    </location>
    <ligand>
        <name>[4Fe-4S] cluster</name>
        <dbReference type="ChEBI" id="CHEBI:49883"/>
        <label>1</label>
    </ligand>
</feature>
<feature type="binding site" evidence="1">
    <location>
        <position position="86"/>
    </location>
    <ligand>
        <name>[4Fe-4S] cluster</name>
        <dbReference type="ChEBI" id="CHEBI:49883"/>
        <label>1</label>
    </ligand>
</feature>
<feature type="binding site" evidence="1">
    <location>
        <position position="90"/>
    </location>
    <ligand>
        <name>[4Fe-4S] cluster</name>
        <dbReference type="ChEBI" id="CHEBI:49883"/>
        <label>2</label>
    </ligand>
</feature>
<feature type="binding site" evidence="1">
    <location>
        <position position="128"/>
    </location>
    <ligand>
        <name>FAD</name>
        <dbReference type="ChEBI" id="CHEBI:57692"/>
    </ligand>
</feature>
<feature type="binding site" evidence="1">
    <location>
        <position position="129"/>
    </location>
    <ligand>
        <name>[4Fe-4S] cluster</name>
        <dbReference type="ChEBI" id="CHEBI:49883"/>
        <label>2</label>
    </ligand>
</feature>
<feature type="binding site" evidence="1">
    <location>
        <position position="135"/>
    </location>
    <ligand>
        <name>[4Fe-4S] cluster</name>
        <dbReference type="ChEBI" id="CHEBI:49883"/>
        <label>2</label>
    </ligand>
</feature>
<feature type="binding site" evidence="1">
    <location>
        <position position="139"/>
    </location>
    <ligand>
        <name>[4Fe-4S] cluster</name>
        <dbReference type="ChEBI" id="CHEBI:49883"/>
        <label>1</label>
    </ligand>
</feature>
<feature type="binding site" evidence="1">
    <location>
        <position position="155"/>
    </location>
    <ligand>
        <name>[4Fe-4S] cluster</name>
        <dbReference type="ChEBI" id="CHEBI:49883"/>
        <label>2</label>
    </ligand>
</feature>
<feature type="binding site" evidence="1">
    <location>
        <begin position="193"/>
        <end position="197"/>
    </location>
    <ligand>
        <name>FAD</name>
        <dbReference type="ChEBI" id="CHEBI:57692"/>
    </ligand>
</feature>
<feature type="binding site" evidence="1">
    <location>
        <begin position="217"/>
        <end position="225"/>
    </location>
    <ligand>
        <name>FAD</name>
        <dbReference type="ChEBI" id="CHEBI:57692"/>
    </ligand>
</feature>
<feature type="binding site" evidence="1">
    <location>
        <position position="234"/>
    </location>
    <ligand>
        <name>FAD</name>
        <dbReference type="ChEBI" id="CHEBI:57692"/>
    </ligand>
</feature>
<feature type="binding site" evidence="1">
    <location>
        <position position="260"/>
    </location>
    <ligand>
        <name>FAD</name>
        <dbReference type="ChEBI" id="CHEBI:57692"/>
    </ligand>
</feature>
<feature type="binding site" evidence="1">
    <location>
        <begin position="339"/>
        <end position="342"/>
    </location>
    <ligand>
        <name>NADP(+)</name>
        <dbReference type="ChEBI" id="CHEBI:58349"/>
    </ligand>
</feature>
<feature type="binding site" evidence="1">
    <location>
        <begin position="363"/>
        <end position="364"/>
    </location>
    <ligand>
        <name>NADP(+)</name>
        <dbReference type="ChEBI" id="CHEBI:58349"/>
    </ligand>
</feature>
<feature type="binding site" evidence="1">
    <location>
        <position position="370"/>
    </location>
    <ligand>
        <name>NADP(+)</name>
        <dbReference type="ChEBI" id="CHEBI:58349"/>
    </ligand>
</feature>
<feature type="binding site" evidence="1">
    <location>
        <begin position="436"/>
        <end position="438"/>
    </location>
    <ligand>
        <name>NADP(+)</name>
        <dbReference type="ChEBI" id="CHEBI:58349"/>
    </ligand>
</feature>
<feature type="binding site" evidence="1">
    <location>
        <begin position="478"/>
        <end position="486"/>
    </location>
    <ligand>
        <name>FAD</name>
        <dbReference type="ChEBI" id="CHEBI:57692"/>
    </ligand>
</feature>
<feature type="binding site" evidence="1">
    <location>
        <begin position="479"/>
        <end position="484"/>
    </location>
    <ligand>
        <name>NADP(+)</name>
        <dbReference type="ChEBI" id="CHEBI:58349"/>
    </ligand>
</feature>
<feature type="binding site" evidence="1">
    <location>
        <position position="548"/>
    </location>
    <ligand>
        <name>FMN</name>
        <dbReference type="ChEBI" id="CHEBI:58210"/>
    </ligand>
</feature>
<feature type="binding site" evidence="1">
    <location>
        <begin position="572"/>
        <end position="573"/>
    </location>
    <ligand>
        <name>FMN</name>
        <dbReference type="ChEBI" id="CHEBI:58210"/>
    </ligand>
</feature>
<feature type="binding site" evidence="1">
    <location>
        <position position="607"/>
    </location>
    <ligand>
        <name>substrate</name>
    </ligand>
</feature>
<feature type="binding site" evidence="1">
    <location>
        <begin position="666"/>
        <end position="668"/>
    </location>
    <ligand>
        <name>substrate</name>
    </ligand>
</feature>
<feature type="binding site" evidence="1">
    <location>
        <position position="707"/>
    </location>
    <ligand>
        <name>FMN</name>
        <dbReference type="ChEBI" id="CHEBI:58210"/>
    </ligand>
</feature>
<feature type="binding site" evidence="1">
    <location>
        <begin position="734"/>
        <end position="735"/>
    </location>
    <ligand>
        <name>substrate</name>
    </ligand>
</feature>
<feature type="binding site" evidence="1">
    <location>
        <position position="765"/>
    </location>
    <ligand>
        <name>FMN</name>
        <dbReference type="ChEBI" id="CHEBI:58210"/>
    </ligand>
</feature>
<feature type="binding site" evidence="1">
    <location>
        <begin position="791"/>
        <end position="793"/>
    </location>
    <ligand>
        <name>FMN</name>
        <dbReference type="ChEBI" id="CHEBI:58210"/>
    </ligand>
</feature>
<feature type="binding site" evidence="1">
    <location>
        <begin position="814"/>
        <end position="815"/>
    </location>
    <ligand>
        <name>FMN</name>
        <dbReference type="ChEBI" id="CHEBI:58210"/>
    </ligand>
</feature>
<feature type="binding site" evidence="1">
    <location>
        <position position="941"/>
    </location>
    <ligand>
        <name>[4Fe-4S] cluster</name>
        <dbReference type="ChEBI" id="CHEBI:49883"/>
        <label>3</label>
    </ligand>
</feature>
<feature type="binding site" evidence="1">
    <location>
        <position position="944"/>
    </location>
    <ligand>
        <name>[4Fe-4S] cluster</name>
        <dbReference type="ChEBI" id="CHEBI:49883"/>
        <label>3</label>
    </ligand>
</feature>
<feature type="binding site" evidence="1">
    <location>
        <position position="947"/>
    </location>
    <ligand>
        <name>[4Fe-4S] cluster</name>
        <dbReference type="ChEBI" id="CHEBI:49883"/>
        <label>3</label>
    </ligand>
</feature>
<feature type="binding site" evidence="1">
    <location>
        <position position="951"/>
    </location>
    <ligand>
        <name>[4Fe-4S] cluster</name>
        <dbReference type="ChEBI" id="CHEBI:49883"/>
        <label>3</label>
    </ligand>
</feature>
<feature type="binding site" evidence="1">
    <location>
        <position position="974"/>
    </location>
    <ligand>
        <name>[4Fe-4S] cluster</name>
        <dbReference type="ChEBI" id="CHEBI:49883"/>
        <label>4</label>
    </ligand>
</feature>
<feature type="binding site" evidence="1">
    <location>
        <position position="977"/>
    </location>
    <ligand>
        <name>[4Fe-4S] cluster</name>
        <dbReference type="ChEBI" id="CHEBI:49883"/>
        <label>4</label>
    </ligand>
</feature>
<feature type="binding site" evidence="1">
    <location>
        <position position="980"/>
    </location>
    <ligand>
        <name>[4Fe-4S] cluster</name>
        <dbReference type="ChEBI" id="CHEBI:49883"/>
        <label>4</label>
    </ligand>
</feature>
<feature type="binding site" evidence="1">
    <location>
        <position position="984"/>
    </location>
    <ligand>
        <name>[4Fe-4S] cluster</name>
        <dbReference type="ChEBI" id="CHEBI:49883"/>
        <label>4</label>
    </ligand>
</feature>
<feature type="sequence conflict" description="In Ref. 1; AAQ11981." evidence="3" ref="1">
    <original>E</original>
    <variation>G</variation>
    <location>
        <position position="68"/>
    </location>
</feature>
<feature type="sequence conflict" description="In Ref. 1; AAQ11981." evidence="3" ref="1">
    <original>R</original>
    <variation>H</variation>
    <location>
        <position position="234"/>
    </location>
</feature>
<feature type="sequence conflict" description="In Ref. 1; AAQ11981." evidence="3" ref="1">
    <original>S</original>
    <variation>C</variation>
    <location>
        <position position="532"/>
    </location>
</feature>
<organism>
    <name type="scientific">Dictyostelium discoideum</name>
    <name type="common">Social amoeba</name>
    <dbReference type="NCBI Taxonomy" id="44689"/>
    <lineage>
        <taxon>Eukaryota</taxon>
        <taxon>Amoebozoa</taxon>
        <taxon>Evosea</taxon>
        <taxon>Eumycetozoa</taxon>
        <taxon>Dictyostelia</taxon>
        <taxon>Dictyosteliales</taxon>
        <taxon>Dictyosteliaceae</taxon>
        <taxon>Dictyostelium</taxon>
    </lineage>
</organism>
<name>DPYD_DICDI</name>
<protein>
    <recommendedName>
        <fullName>Dihydropyrimidine dehydrogenase [NADP(+)]</fullName>
        <shortName>DHPDHase</shortName>
        <shortName>DPD</shortName>
        <ecNumber>1.3.1.2</ecNumber>
    </recommendedName>
    <alternativeName>
        <fullName>Dihydrothymine dehydrogenase</fullName>
    </alternativeName>
    <alternativeName>
        <fullName>Dihydrouracil dehydrogenase</fullName>
    </alternativeName>
</protein>
<sequence length="1009" mass="110444">MTGHTGDVSQVHDIEILALNPTVNKHATFKPTIVSKKDKENWARLDHCKKGCELKNDFEDVKPTTLTERGALFESARCLKCADAPCQKGCPTQLDIKSFISSISTKNYYGAAKTIFSDNPLGLTCGMVCPVSSLCQYGCNLAATEEGPINIGGLQQFATEVFKKMNIPQIRDPSLTPLSQLPESYKAKIALIGCGPTSISCATFLGRLGYTDVTIFEKEQYLGGLSSSEIPNYRLNYEVVEFEIKLMKDLGVKVEYGKRLGENGFTVESLQKQGYEAIYLGIGMPEPKIDPVFNELTSDQGFFSSKEFLPKVSKASKAGMCGCKSQLPQLNGRVIVLGAGDTAFDCATSAFRCGASRVTVCFRRGFSDMRAVPEEVDIAKDERCEFLPYVLPKQVIKRDGKVVAMEFYKTEKGDDGNYSVDEDQFFRVKCDYIISAFGSQIGSVAESCSPLQFNKWGTADIDPMTMTSKHAEWLFCGGDLVGNGTTVEAVNDGKTASWNIHKYLQSLHGIPIPDGPPQLPNFFTPIDLVDISVEMCGMKFPNPFGLASATPATSAAMIRRSFEQGWGFAVTKTFSLDKDLVTNVSPRIVRGTTSGHHFGPGQGAFLNIELISEKTCHYWCKAIGELKRDFPDRIVIASIMCGFNKEDWTQLAKMAEASGADGIELNLSCPHGMGEKGMGLACGQDTELVFHICQWVRAATRLPFFAKLTPNVTEIKEIAKAAHDGGADGVTAINTVSGLMGLKGDSNAWPAIGDEKRTTYGGVSGNATRPIALRAVSSIRKSLPDYPIMATGGADSADATIQFLHCGASVVQICSSVQNQDFTVVQDYITGLKTYLYMQSREDLLQWDGQSPPNEIINKNPKLKGLPKFGKYLLERNRIDTEEKQNIDLQKVKNPLVPSPNPTHPVPSLKDQINRAIPRIGRHDDLKRDQQVVALIDEDKCINCGKCYMTCNDSGYQAIKFDGKTHIPLVTDLCTGCDLCLSVCPVPDCITMVPRETIYVPDRGLTVQN</sequence>
<dbReference type="EC" id="1.3.1.2"/>
<dbReference type="EMBL" id="AF545064">
    <property type="protein sequence ID" value="AAQ11981.1"/>
    <property type="molecule type" value="mRNA"/>
</dbReference>
<dbReference type="EMBL" id="AAFI02000003">
    <property type="protein sequence ID" value="EAL73436.1"/>
    <property type="molecule type" value="Genomic_DNA"/>
</dbReference>
<dbReference type="RefSeq" id="XP_647452.1">
    <property type="nucleotide sequence ID" value="XM_642360.1"/>
</dbReference>
<dbReference type="SMR" id="Q55FT1"/>
<dbReference type="FunCoup" id="Q55FT1">
    <property type="interactions" value="105"/>
</dbReference>
<dbReference type="STRING" id="44689.Q55FT1"/>
<dbReference type="GlyGen" id="Q55FT1">
    <property type="glycosylation" value="1 site"/>
</dbReference>
<dbReference type="PaxDb" id="44689-DDB0231100"/>
<dbReference type="EnsemblProtists" id="EAL73436">
    <property type="protein sequence ID" value="EAL73436"/>
    <property type="gene ID" value="DDB_G0267966"/>
</dbReference>
<dbReference type="GeneID" id="8616259"/>
<dbReference type="KEGG" id="ddi:DDB_G0267966"/>
<dbReference type="dictyBase" id="DDB_G0267966">
    <property type="gene designation" value="pyd1"/>
</dbReference>
<dbReference type="VEuPathDB" id="AmoebaDB:DDB_G0267966"/>
<dbReference type="eggNOG" id="KOG1799">
    <property type="taxonomic scope" value="Eukaryota"/>
</dbReference>
<dbReference type="HOGENOM" id="CLU_003991_0_0_1"/>
<dbReference type="InParanoid" id="Q55FT1"/>
<dbReference type="OMA" id="SIHCQLQ"/>
<dbReference type="PhylomeDB" id="Q55FT1"/>
<dbReference type="Reactome" id="R-DDI-73621">
    <property type="pathway name" value="Pyrimidine catabolism"/>
</dbReference>
<dbReference type="UniPathway" id="UPA00131"/>
<dbReference type="PRO" id="PR:Q55FT1"/>
<dbReference type="Proteomes" id="UP000002195">
    <property type="component" value="Chromosome 1"/>
</dbReference>
<dbReference type="GO" id="GO:0005737">
    <property type="term" value="C:cytoplasm"/>
    <property type="evidence" value="ECO:0000250"/>
    <property type="project" value="UniProtKB"/>
</dbReference>
<dbReference type="GO" id="GO:0005829">
    <property type="term" value="C:cytosol"/>
    <property type="evidence" value="ECO:0000318"/>
    <property type="project" value="GO_Central"/>
</dbReference>
<dbReference type="GO" id="GO:0051539">
    <property type="term" value="F:4 iron, 4 sulfur cluster binding"/>
    <property type="evidence" value="ECO:0007669"/>
    <property type="project" value="UniProtKB-KW"/>
</dbReference>
<dbReference type="GO" id="GO:0017113">
    <property type="term" value="F:dihydropyrimidine dehydrogenase (NADP+) activity"/>
    <property type="evidence" value="ECO:0000250"/>
    <property type="project" value="UniProtKB"/>
</dbReference>
<dbReference type="GO" id="GO:0046872">
    <property type="term" value="F:metal ion binding"/>
    <property type="evidence" value="ECO:0007669"/>
    <property type="project" value="UniProtKB-KW"/>
</dbReference>
<dbReference type="GO" id="GO:0050661">
    <property type="term" value="F:NADP binding"/>
    <property type="evidence" value="ECO:0000318"/>
    <property type="project" value="GO_Central"/>
</dbReference>
<dbReference type="GO" id="GO:0002058">
    <property type="term" value="F:uracil binding"/>
    <property type="evidence" value="ECO:0000318"/>
    <property type="project" value="GO_Central"/>
</dbReference>
<dbReference type="GO" id="GO:0019483">
    <property type="term" value="P:beta-alanine biosynthetic process"/>
    <property type="evidence" value="ECO:0007669"/>
    <property type="project" value="UniProtKB-UniPathway"/>
</dbReference>
<dbReference type="GO" id="GO:0006214">
    <property type="term" value="P:thymidine catabolic process"/>
    <property type="evidence" value="ECO:0000250"/>
    <property type="project" value="UniProtKB"/>
</dbReference>
<dbReference type="GO" id="GO:0006210">
    <property type="term" value="P:thymine catabolic process"/>
    <property type="evidence" value="ECO:0000318"/>
    <property type="project" value="GO_Central"/>
</dbReference>
<dbReference type="GO" id="GO:0006212">
    <property type="term" value="P:uracil catabolic process"/>
    <property type="evidence" value="ECO:0000250"/>
    <property type="project" value="UniProtKB"/>
</dbReference>
<dbReference type="CDD" id="cd02940">
    <property type="entry name" value="DHPD_FMN"/>
    <property type="match status" value="1"/>
</dbReference>
<dbReference type="FunFam" id="3.50.50.60:FF:000750">
    <property type="entry name" value="Dihydropyrimidine dehydrogenase"/>
    <property type="match status" value="1"/>
</dbReference>
<dbReference type="FunFam" id="1.10.1060.10:FF:000007">
    <property type="entry name" value="Dihydropyrimidine dehydrogenase [NADP(+)]"/>
    <property type="match status" value="1"/>
</dbReference>
<dbReference type="FunFam" id="3.20.20.70:FF:000027">
    <property type="entry name" value="Dihydropyrimidine dehydrogenase [NADP(+)]"/>
    <property type="match status" value="1"/>
</dbReference>
<dbReference type="FunFam" id="3.30.70.20:FF:000023">
    <property type="entry name" value="Dihydropyrimidine dehydrogenase [NADP(+)]"/>
    <property type="match status" value="1"/>
</dbReference>
<dbReference type="FunFam" id="3.50.50.60:FF:000056">
    <property type="entry name" value="Dihydropyrimidine dehydrogenase [NADP(+)]"/>
    <property type="match status" value="1"/>
</dbReference>
<dbReference type="Gene3D" id="3.30.70.20">
    <property type="match status" value="1"/>
</dbReference>
<dbReference type="Gene3D" id="3.20.20.70">
    <property type="entry name" value="Aldolase class I"/>
    <property type="match status" value="1"/>
</dbReference>
<dbReference type="Gene3D" id="1.10.1060.10">
    <property type="entry name" value="Alpha-helical ferredoxin"/>
    <property type="match status" value="1"/>
</dbReference>
<dbReference type="Gene3D" id="3.50.50.60">
    <property type="entry name" value="FAD/NAD(P)-binding domain"/>
    <property type="match status" value="2"/>
</dbReference>
<dbReference type="InterPro" id="IPR017896">
    <property type="entry name" value="4Fe4S_Fe-S-bd"/>
</dbReference>
<dbReference type="InterPro" id="IPR017900">
    <property type="entry name" value="4Fe4S_Fe_S_CS"/>
</dbReference>
<dbReference type="InterPro" id="IPR013785">
    <property type="entry name" value="Aldolase_TIM"/>
</dbReference>
<dbReference type="InterPro" id="IPR005720">
    <property type="entry name" value="Dihydroorotate_DH_cat"/>
</dbReference>
<dbReference type="InterPro" id="IPR028261">
    <property type="entry name" value="DPD_II"/>
</dbReference>
<dbReference type="InterPro" id="IPR036188">
    <property type="entry name" value="FAD/NAD-bd_sf"/>
</dbReference>
<dbReference type="InterPro" id="IPR023753">
    <property type="entry name" value="FAD/NAD-binding_dom"/>
</dbReference>
<dbReference type="InterPro" id="IPR009051">
    <property type="entry name" value="Helical_ferredxn"/>
</dbReference>
<dbReference type="PANTHER" id="PTHR43073">
    <property type="entry name" value="DIHYDROPYRIMIDINE DEHYDROGENASE [NADP(+)]"/>
    <property type="match status" value="1"/>
</dbReference>
<dbReference type="PANTHER" id="PTHR43073:SF2">
    <property type="entry name" value="DIHYDROPYRIMIDINE DEHYDROGENASE [NADP(+)]"/>
    <property type="match status" value="1"/>
</dbReference>
<dbReference type="Pfam" id="PF01180">
    <property type="entry name" value="DHO_dh"/>
    <property type="match status" value="1"/>
</dbReference>
<dbReference type="Pfam" id="PF14691">
    <property type="entry name" value="Fer4_20"/>
    <property type="match status" value="1"/>
</dbReference>
<dbReference type="Pfam" id="PF14697">
    <property type="entry name" value="Fer4_21"/>
    <property type="match status" value="1"/>
</dbReference>
<dbReference type="Pfam" id="PF07992">
    <property type="entry name" value="Pyr_redox_2"/>
    <property type="match status" value="1"/>
</dbReference>
<dbReference type="PRINTS" id="PR00419">
    <property type="entry name" value="ADXRDTASE"/>
</dbReference>
<dbReference type="SUPFAM" id="SSF54862">
    <property type="entry name" value="4Fe-4S ferredoxins"/>
    <property type="match status" value="1"/>
</dbReference>
<dbReference type="SUPFAM" id="SSF51395">
    <property type="entry name" value="FMN-linked oxidoreductases"/>
    <property type="match status" value="1"/>
</dbReference>
<dbReference type="SUPFAM" id="SSF51971">
    <property type="entry name" value="Nucleotide-binding domain"/>
    <property type="match status" value="1"/>
</dbReference>
<dbReference type="PROSITE" id="PS00198">
    <property type="entry name" value="4FE4S_FER_1"/>
    <property type="match status" value="1"/>
</dbReference>
<dbReference type="PROSITE" id="PS51379">
    <property type="entry name" value="4FE4S_FER_2"/>
    <property type="match status" value="3"/>
</dbReference>
<accession>Q55FT1</accession>
<accession>Q5ZQQ8</accession>
<evidence type="ECO:0000250" key="1"/>
<evidence type="ECO:0000255" key="2">
    <source>
        <dbReference type="PROSITE-ProRule" id="PRU00711"/>
    </source>
</evidence>
<evidence type="ECO:0000305" key="3"/>
<comment type="function">
    <text evidence="1">Involved in pyrimidine base degradation. Catalyzes the reduction of uracil and thymine (By similarity).</text>
</comment>
<comment type="catalytic activity">
    <reaction>
        <text>5,6-dihydrouracil + NADP(+) = uracil + NADPH + H(+)</text>
        <dbReference type="Rhea" id="RHEA:18093"/>
        <dbReference type="ChEBI" id="CHEBI:15378"/>
        <dbReference type="ChEBI" id="CHEBI:15901"/>
        <dbReference type="ChEBI" id="CHEBI:17568"/>
        <dbReference type="ChEBI" id="CHEBI:57783"/>
        <dbReference type="ChEBI" id="CHEBI:58349"/>
        <dbReference type="EC" id="1.3.1.2"/>
    </reaction>
</comment>
<comment type="cofactor">
    <cofactor evidence="1">
        <name>[4Fe-4S] cluster</name>
        <dbReference type="ChEBI" id="CHEBI:49883"/>
    </cofactor>
    <text evidence="1">Binds 4 [4Fe-4S] clusters. Contains approximately 16 iron atoms per subunit.</text>
</comment>
<comment type="cofactor">
    <cofactor evidence="1">
        <name>FAD</name>
        <dbReference type="ChEBI" id="CHEBI:57692"/>
    </cofactor>
</comment>
<comment type="cofactor">
    <cofactor evidence="1">
        <name>FMN</name>
        <dbReference type="ChEBI" id="CHEBI:58210"/>
    </cofactor>
</comment>
<comment type="pathway">
    <text>Amino-acid biosynthesis; beta-alanine biosynthesis.</text>
</comment>
<comment type="subunit">
    <text evidence="1">Homodimer.</text>
</comment>
<comment type="subcellular location">
    <subcellularLocation>
        <location evidence="1">Cytoplasm</location>
    </subcellularLocation>
</comment>
<comment type="similarity">
    <text evidence="3">Belongs to the dihydropyrimidine dehydrogenase family.</text>
</comment>
<keyword id="KW-0004">4Fe-4S</keyword>
<keyword id="KW-0963">Cytoplasm</keyword>
<keyword id="KW-0274">FAD</keyword>
<keyword id="KW-0285">Flavoprotein</keyword>
<keyword id="KW-0288">FMN</keyword>
<keyword id="KW-0408">Iron</keyword>
<keyword id="KW-0411">Iron-sulfur</keyword>
<keyword id="KW-0479">Metal-binding</keyword>
<keyword id="KW-0521">NADP</keyword>
<keyword id="KW-0547">Nucleotide-binding</keyword>
<keyword id="KW-0560">Oxidoreductase</keyword>
<keyword id="KW-1185">Reference proteome</keyword>
<keyword id="KW-0677">Repeat</keyword>